<dbReference type="EC" id="4.1.1.32" evidence="1"/>
<dbReference type="EMBL" id="BA000001">
    <property type="protein sequence ID" value="BAA29385.1"/>
    <property type="molecule type" value="Genomic_DNA"/>
</dbReference>
<dbReference type="PIR" id="B71457">
    <property type="entry name" value="B71457"/>
</dbReference>
<dbReference type="RefSeq" id="WP_010884405.1">
    <property type="nucleotide sequence ID" value="NC_000961.1"/>
</dbReference>
<dbReference type="SMR" id="O58050"/>
<dbReference type="STRING" id="70601.gene:9377230"/>
<dbReference type="EnsemblBacteria" id="BAA29385">
    <property type="protein sequence ID" value="BAA29385"/>
    <property type="gene ID" value="BAA29385"/>
</dbReference>
<dbReference type="GeneID" id="1444192"/>
<dbReference type="KEGG" id="pho:PH0312"/>
<dbReference type="eggNOG" id="arCOG05865">
    <property type="taxonomic scope" value="Archaea"/>
</dbReference>
<dbReference type="OrthoDB" id="55875at2157"/>
<dbReference type="UniPathway" id="UPA00138"/>
<dbReference type="Proteomes" id="UP000000752">
    <property type="component" value="Chromosome"/>
</dbReference>
<dbReference type="GO" id="GO:0005829">
    <property type="term" value="C:cytosol"/>
    <property type="evidence" value="ECO:0007669"/>
    <property type="project" value="TreeGrafter"/>
</dbReference>
<dbReference type="GO" id="GO:0005525">
    <property type="term" value="F:GTP binding"/>
    <property type="evidence" value="ECO:0007669"/>
    <property type="project" value="UniProtKB-UniRule"/>
</dbReference>
<dbReference type="GO" id="GO:0030145">
    <property type="term" value="F:manganese ion binding"/>
    <property type="evidence" value="ECO:0007669"/>
    <property type="project" value="UniProtKB-UniRule"/>
</dbReference>
<dbReference type="GO" id="GO:0004613">
    <property type="term" value="F:phosphoenolpyruvate carboxykinase (GTP) activity"/>
    <property type="evidence" value="ECO:0007669"/>
    <property type="project" value="UniProtKB-UniRule"/>
</dbReference>
<dbReference type="GO" id="GO:0071333">
    <property type="term" value="P:cellular response to glucose stimulus"/>
    <property type="evidence" value="ECO:0007669"/>
    <property type="project" value="TreeGrafter"/>
</dbReference>
<dbReference type="GO" id="GO:0006094">
    <property type="term" value="P:gluconeogenesis"/>
    <property type="evidence" value="ECO:0007669"/>
    <property type="project" value="UniProtKB-UniRule"/>
</dbReference>
<dbReference type="GO" id="GO:0046327">
    <property type="term" value="P:glycerol biosynthetic process from pyruvate"/>
    <property type="evidence" value="ECO:0007669"/>
    <property type="project" value="TreeGrafter"/>
</dbReference>
<dbReference type="GO" id="GO:0006107">
    <property type="term" value="P:oxaloacetate metabolic process"/>
    <property type="evidence" value="ECO:0007669"/>
    <property type="project" value="TreeGrafter"/>
</dbReference>
<dbReference type="GO" id="GO:0019543">
    <property type="term" value="P:propionate catabolic process"/>
    <property type="evidence" value="ECO:0007669"/>
    <property type="project" value="TreeGrafter"/>
</dbReference>
<dbReference type="GO" id="GO:0033993">
    <property type="term" value="P:response to lipid"/>
    <property type="evidence" value="ECO:0007669"/>
    <property type="project" value="TreeGrafter"/>
</dbReference>
<dbReference type="GO" id="GO:0042594">
    <property type="term" value="P:response to starvation"/>
    <property type="evidence" value="ECO:0007669"/>
    <property type="project" value="TreeGrafter"/>
</dbReference>
<dbReference type="CDD" id="cd00819">
    <property type="entry name" value="PEPCK_GTP"/>
    <property type="match status" value="1"/>
</dbReference>
<dbReference type="FunFam" id="3.40.449.10:FF:000010">
    <property type="entry name" value="Phosphoenolpyruvate carboxykinase [GTP]"/>
    <property type="match status" value="1"/>
</dbReference>
<dbReference type="Gene3D" id="3.90.228.20">
    <property type="match status" value="1"/>
</dbReference>
<dbReference type="Gene3D" id="3.40.449.10">
    <property type="entry name" value="Phosphoenolpyruvate Carboxykinase, domain 1"/>
    <property type="match status" value="1"/>
</dbReference>
<dbReference type="Gene3D" id="2.170.8.10">
    <property type="entry name" value="Phosphoenolpyruvate Carboxykinase, domain 2"/>
    <property type="match status" value="1"/>
</dbReference>
<dbReference type="HAMAP" id="MF_00452">
    <property type="entry name" value="PEPCK_GTP"/>
    <property type="match status" value="1"/>
</dbReference>
<dbReference type="InterPro" id="IPR018091">
    <property type="entry name" value="PEP_carboxykin_GTP_CS"/>
</dbReference>
<dbReference type="InterPro" id="IPR013035">
    <property type="entry name" value="PEP_carboxykinase_C"/>
</dbReference>
<dbReference type="InterPro" id="IPR008209">
    <property type="entry name" value="PEP_carboxykinase_GTP"/>
</dbReference>
<dbReference type="InterPro" id="IPR035077">
    <property type="entry name" value="PEP_carboxykinase_GTP_C"/>
</dbReference>
<dbReference type="InterPro" id="IPR035078">
    <property type="entry name" value="PEP_carboxykinase_GTP_N"/>
</dbReference>
<dbReference type="InterPro" id="IPR008210">
    <property type="entry name" value="PEP_carboxykinase_N"/>
</dbReference>
<dbReference type="NCBIfam" id="NF003253">
    <property type="entry name" value="PRK04210.1"/>
    <property type="match status" value="1"/>
</dbReference>
<dbReference type="PANTHER" id="PTHR11561">
    <property type="entry name" value="PHOSPHOENOLPYRUVATE CARBOXYKINASE"/>
    <property type="match status" value="1"/>
</dbReference>
<dbReference type="PANTHER" id="PTHR11561:SF0">
    <property type="entry name" value="PHOSPHOENOLPYRUVATE CARBOXYKINASE [GTP]-RELATED"/>
    <property type="match status" value="1"/>
</dbReference>
<dbReference type="Pfam" id="PF00821">
    <property type="entry name" value="PEPCK_GTP"/>
    <property type="match status" value="1"/>
</dbReference>
<dbReference type="Pfam" id="PF17297">
    <property type="entry name" value="PEPCK_N"/>
    <property type="match status" value="1"/>
</dbReference>
<dbReference type="PIRSF" id="PIRSF001348">
    <property type="entry name" value="PEP_carboxykinase_GTP"/>
    <property type="match status" value="1"/>
</dbReference>
<dbReference type="SUPFAM" id="SSF68923">
    <property type="entry name" value="PEP carboxykinase N-terminal domain"/>
    <property type="match status" value="1"/>
</dbReference>
<dbReference type="SUPFAM" id="SSF53795">
    <property type="entry name" value="PEP carboxykinase-like"/>
    <property type="match status" value="1"/>
</dbReference>
<dbReference type="PROSITE" id="PS00505">
    <property type="entry name" value="PEPCK_GTP"/>
    <property type="match status" value="1"/>
</dbReference>
<protein>
    <recommendedName>
        <fullName evidence="1">Phosphoenolpyruvate carboxykinase [GTP]</fullName>
        <shortName evidence="1">PEP carboxykinase</shortName>
        <shortName evidence="1">PEPCK</shortName>
        <ecNumber evidence="1">4.1.1.32</ecNumber>
    </recommendedName>
</protein>
<gene>
    <name evidence="1" type="primary">pckG</name>
    <name type="ordered locus">PH0312</name>
</gene>
<feature type="chain" id="PRO_0000103619" description="Phosphoenolpyruvate carboxykinase [GTP]">
    <location>
        <begin position="1"/>
        <end position="621"/>
    </location>
</feature>
<feature type="active site" evidence="1">
    <location>
        <position position="269"/>
    </location>
</feature>
<feature type="binding site" evidence="1">
    <location>
        <position position="83"/>
    </location>
    <ligand>
        <name>substrate</name>
    </ligand>
</feature>
<feature type="binding site" evidence="1">
    <location>
        <begin position="217"/>
        <end position="219"/>
    </location>
    <ligand>
        <name>substrate</name>
    </ligand>
</feature>
<feature type="binding site" evidence="1">
    <location>
        <position position="226"/>
    </location>
    <ligand>
        <name>Mn(2+)</name>
        <dbReference type="ChEBI" id="CHEBI:29035"/>
    </ligand>
</feature>
<feature type="binding site" evidence="1">
    <location>
        <position position="245"/>
    </location>
    <ligand>
        <name>Mn(2+)</name>
        <dbReference type="ChEBI" id="CHEBI:29035"/>
    </ligand>
</feature>
<feature type="binding site" evidence="1">
    <location>
        <position position="267"/>
    </location>
    <ligand>
        <name>substrate</name>
    </ligand>
</feature>
<feature type="binding site" evidence="1">
    <location>
        <begin position="268"/>
        <end position="273"/>
    </location>
    <ligand>
        <name>GTP</name>
        <dbReference type="ChEBI" id="CHEBI:37565"/>
    </ligand>
</feature>
<feature type="binding site" evidence="1">
    <location>
        <position position="286"/>
    </location>
    <ligand>
        <name>Mn(2+)</name>
        <dbReference type="ChEBI" id="CHEBI:29035"/>
    </ligand>
</feature>
<feature type="binding site" evidence="1">
    <location>
        <begin position="381"/>
        <end position="383"/>
    </location>
    <ligand>
        <name>substrate</name>
    </ligand>
</feature>
<feature type="binding site" evidence="1">
    <location>
        <position position="383"/>
    </location>
    <ligand>
        <name>GTP</name>
        <dbReference type="ChEBI" id="CHEBI:37565"/>
    </ligand>
</feature>
<feature type="binding site" evidence="1">
    <location>
        <position position="415"/>
    </location>
    <ligand>
        <name>GTP</name>
        <dbReference type="ChEBI" id="CHEBI:37565"/>
    </ligand>
</feature>
<sequence>MEKLRELLPKDQYEKIAAINNPYLHEFLAEWIEWLEPSKVFVCTDSPEDEEYVRWKALYYGEEKMLEIPKHTVHYDNYYDQARDKTNTKLLVPKGVELPFLNTMNREEGLKEIREIMKGIMRGKELFICFFVLGPTNSIFTIPAVQLTDSAYVAHSEFLLYRKGYEEFKRLGPTKNFFKFVHSAGELDERKTSKNLDKRRIYIDLLDETVYSANTQYGGNTIGLKKLAFRLTIQRAVKEGWLSEHMFLMRVNGPNGRKTYFTGAYPSMCGKTSTAMIPWENIVGDDLVFIKNVDGIARAVNVEIGVFGIIEGVNQKDDPIIWKVLHSPVEIIFSNVLVKDGKPYWNGMGIEIPDEGENHSGKWWRGKRDAEGKEIPPSHKNARFTVRLEAFPNLDREALNNPCGVEVGGMIFGGRDPDTWPPVREAFDWEHGVITMGASLESETTAATLGKEGVRAFNPMSILDFLSVHIGDYIRNYLEFGRKLKKTPKIFAVNYFLRENGRWLNEKLDKAVWLKWMELRVHNDVDAIETPIGYIPRYEDLKVLFKQVLNKDYSREDYEKQFKIRVPELLAKIERIWKIYEPIDNIPEELFKQLKDERERLLKAKAEFGDYISPFTLEKRI</sequence>
<reference key="1">
    <citation type="journal article" date="1998" name="DNA Res.">
        <title>Complete sequence and gene organization of the genome of a hyper-thermophilic archaebacterium, Pyrococcus horikoshii OT3.</title>
        <authorList>
            <person name="Kawarabayasi Y."/>
            <person name="Sawada M."/>
            <person name="Horikawa H."/>
            <person name="Haikawa Y."/>
            <person name="Hino Y."/>
            <person name="Yamamoto S."/>
            <person name="Sekine M."/>
            <person name="Baba S."/>
            <person name="Kosugi H."/>
            <person name="Hosoyama A."/>
            <person name="Nagai Y."/>
            <person name="Sakai M."/>
            <person name="Ogura K."/>
            <person name="Otsuka R."/>
            <person name="Nakazawa H."/>
            <person name="Takamiya M."/>
            <person name="Ohfuku Y."/>
            <person name="Funahashi T."/>
            <person name="Tanaka T."/>
            <person name="Kudoh Y."/>
            <person name="Yamazaki J."/>
            <person name="Kushida N."/>
            <person name="Oguchi A."/>
            <person name="Aoki K."/>
            <person name="Yoshizawa T."/>
            <person name="Nakamura Y."/>
            <person name="Robb F.T."/>
            <person name="Horikoshi K."/>
            <person name="Masuchi Y."/>
            <person name="Shizuya H."/>
            <person name="Kikuchi H."/>
        </authorList>
    </citation>
    <scope>NUCLEOTIDE SEQUENCE [LARGE SCALE GENOMIC DNA]</scope>
    <source>
        <strain>ATCC 700860 / DSM 12428 / JCM 9974 / NBRC 100139 / OT-3</strain>
    </source>
</reference>
<accession>O58050</accession>
<proteinExistence type="inferred from homology"/>
<comment type="function">
    <text evidence="1">Catalyzes the conversion of oxaloacetate (OAA) to phosphoenolpyruvate (PEP), the rate-limiting step in the metabolic pathway that produces glucose from lactate and other precursors derived from the citric acid cycle.</text>
</comment>
<comment type="catalytic activity">
    <reaction evidence="1">
        <text>oxaloacetate + GTP = phosphoenolpyruvate + GDP + CO2</text>
        <dbReference type="Rhea" id="RHEA:10388"/>
        <dbReference type="ChEBI" id="CHEBI:16452"/>
        <dbReference type="ChEBI" id="CHEBI:16526"/>
        <dbReference type="ChEBI" id="CHEBI:37565"/>
        <dbReference type="ChEBI" id="CHEBI:58189"/>
        <dbReference type="ChEBI" id="CHEBI:58702"/>
        <dbReference type="EC" id="4.1.1.32"/>
    </reaction>
</comment>
<comment type="cofactor">
    <cofactor evidence="1">
        <name>Mn(2+)</name>
        <dbReference type="ChEBI" id="CHEBI:29035"/>
    </cofactor>
    <text evidence="1">Binds 1 Mn(2+) ion per subunit.</text>
</comment>
<comment type="pathway">
    <text evidence="1">Carbohydrate biosynthesis; gluconeogenesis.</text>
</comment>
<comment type="subcellular location">
    <subcellularLocation>
        <location evidence="1">Cytoplasm</location>
    </subcellularLocation>
</comment>
<comment type="similarity">
    <text evidence="1">Belongs to the phosphoenolpyruvate carboxykinase [GTP] family.</text>
</comment>
<keyword id="KW-0963">Cytoplasm</keyword>
<keyword id="KW-0210">Decarboxylase</keyword>
<keyword id="KW-0312">Gluconeogenesis</keyword>
<keyword id="KW-0342">GTP-binding</keyword>
<keyword id="KW-0456">Lyase</keyword>
<keyword id="KW-0464">Manganese</keyword>
<keyword id="KW-0479">Metal-binding</keyword>
<keyword id="KW-0547">Nucleotide-binding</keyword>
<evidence type="ECO:0000255" key="1">
    <source>
        <dbReference type="HAMAP-Rule" id="MF_00452"/>
    </source>
</evidence>
<organism>
    <name type="scientific">Pyrococcus horikoshii (strain ATCC 700860 / DSM 12428 / JCM 9974 / NBRC 100139 / OT-3)</name>
    <dbReference type="NCBI Taxonomy" id="70601"/>
    <lineage>
        <taxon>Archaea</taxon>
        <taxon>Methanobacteriati</taxon>
        <taxon>Methanobacteriota</taxon>
        <taxon>Thermococci</taxon>
        <taxon>Thermococcales</taxon>
        <taxon>Thermococcaceae</taxon>
        <taxon>Pyrococcus</taxon>
    </lineage>
</organism>
<name>PCKG_PYRHO</name>